<organism>
    <name type="scientific">Rickettsia rickettsii (strain Sheila Smith)</name>
    <dbReference type="NCBI Taxonomy" id="392021"/>
    <lineage>
        <taxon>Bacteria</taxon>
        <taxon>Pseudomonadati</taxon>
        <taxon>Pseudomonadota</taxon>
        <taxon>Alphaproteobacteria</taxon>
        <taxon>Rickettsiales</taxon>
        <taxon>Rickettsiaceae</taxon>
        <taxon>Rickettsieae</taxon>
        <taxon>Rickettsia</taxon>
        <taxon>spotted fever group</taxon>
    </lineage>
</organism>
<protein>
    <recommendedName>
        <fullName evidence="1">Large ribosomal subunit protein uL14</fullName>
    </recommendedName>
    <alternativeName>
        <fullName evidence="2">50S ribosomal protein L14</fullName>
    </alternativeName>
</protein>
<name>RL14_RICRS</name>
<dbReference type="EMBL" id="CP000848">
    <property type="protein sequence ID" value="ABV76584.1"/>
    <property type="molecule type" value="Genomic_DNA"/>
</dbReference>
<dbReference type="RefSeq" id="WP_012151146.1">
    <property type="nucleotide sequence ID" value="NZ_CP121767.1"/>
</dbReference>
<dbReference type="SMR" id="A8GT59"/>
<dbReference type="GeneID" id="79937660"/>
<dbReference type="KEGG" id="rri:A1G_05505"/>
<dbReference type="HOGENOM" id="CLU_095071_2_1_5"/>
<dbReference type="Proteomes" id="UP000006832">
    <property type="component" value="Chromosome"/>
</dbReference>
<dbReference type="GO" id="GO:0022625">
    <property type="term" value="C:cytosolic large ribosomal subunit"/>
    <property type="evidence" value="ECO:0007669"/>
    <property type="project" value="TreeGrafter"/>
</dbReference>
<dbReference type="GO" id="GO:0070180">
    <property type="term" value="F:large ribosomal subunit rRNA binding"/>
    <property type="evidence" value="ECO:0007669"/>
    <property type="project" value="TreeGrafter"/>
</dbReference>
<dbReference type="GO" id="GO:0003735">
    <property type="term" value="F:structural constituent of ribosome"/>
    <property type="evidence" value="ECO:0007669"/>
    <property type="project" value="InterPro"/>
</dbReference>
<dbReference type="GO" id="GO:0006412">
    <property type="term" value="P:translation"/>
    <property type="evidence" value="ECO:0007669"/>
    <property type="project" value="UniProtKB-UniRule"/>
</dbReference>
<dbReference type="CDD" id="cd00337">
    <property type="entry name" value="Ribosomal_uL14"/>
    <property type="match status" value="1"/>
</dbReference>
<dbReference type="FunFam" id="2.40.150.20:FF:000001">
    <property type="entry name" value="50S ribosomal protein L14"/>
    <property type="match status" value="1"/>
</dbReference>
<dbReference type="Gene3D" id="2.40.150.20">
    <property type="entry name" value="Ribosomal protein L14"/>
    <property type="match status" value="1"/>
</dbReference>
<dbReference type="HAMAP" id="MF_01367">
    <property type="entry name" value="Ribosomal_uL14"/>
    <property type="match status" value="1"/>
</dbReference>
<dbReference type="InterPro" id="IPR000218">
    <property type="entry name" value="Ribosomal_uL14"/>
</dbReference>
<dbReference type="InterPro" id="IPR005745">
    <property type="entry name" value="Ribosomal_uL14_bac-type"/>
</dbReference>
<dbReference type="InterPro" id="IPR019972">
    <property type="entry name" value="Ribosomal_uL14_CS"/>
</dbReference>
<dbReference type="InterPro" id="IPR036853">
    <property type="entry name" value="Ribosomal_uL14_sf"/>
</dbReference>
<dbReference type="NCBIfam" id="TIGR01067">
    <property type="entry name" value="rplN_bact"/>
    <property type="match status" value="1"/>
</dbReference>
<dbReference type="PANTHER" id="PTHR11761">
    <property type="entry name" value="50S/60S RIBOSOMAL PROTEIN L14/L23"/>
    <property type="match status" value="1"/>
</dbReference>
<dbReference type="PANTHER" id="PTHR11761:SF3">
    <property type="entry name" value="LARGE RIBOSOMAL SUBUNIT PROTEIN UL14M"/>
    <property type="match status" value="1"/>
</dbReference>
<dbReference type="Pfam" id="PF00238">
    <property type="entry name" value="Ribosomal_L14"/>
    <property type="match status" value="1"/>
</dbReference>
<dbReference type="SMART" id="SM01374">
    <property type="entry name" value="Ribosomal_L14"/>
    <property type="match status" value="1"/>
</dbReference>
<dbReference type="SUPFAM" id="SSF50193">
    <property type="entry name" value="Ribosomal protein L14"/>
    <property type="match status" value="1"/>
</dbReference>
<dbReference type="PROSITE" id="PS00049">
    <property type="entry name" value="RIBOSOMAL_L14"/>
    <property type="match status" value="1"/>
</dbReference>
<accession>A8GT59</accession>
<comment type="function">
    <text evidence="1">Binds to 23S rRNA. Forms part of two intersubunit bridges in the 70S ribosome.</text>
</comment>
<comment type="subunit">
    <text evidence="1">Part of the 50S ribosomal subunit. Forms a cluster with proteins L3 and L19. In the 70S ribosome, L14 and L19 interact and together make contacts with the 16S rRNA in bridges B5 and B8.</text>
</comment>
<comment type="similarity">
    <text evidence="1">Belongs to the universal ribosomal protein uL14 family.</text>
</comment>
<keyword id="KW-0687">Ribonucleoprotein</keyword>
<keyword id="KW-0689">Ribosomal protein</keyword>
<keyword id="KW-0694">RNA-binding</keyword>
<keyword id="KW-0699">rRNA-binding</keyword>
<evidence type="ECO:0000255" key="1">
    <source>
        <dbReference type="HAMAP-Rule" id="MF_01367"/>
    </source>
</evidence>
<evidence type="ECO:0000305" key="2"/>
<proteinExistence type="inferred from homology"/>
<gene>
    <name evidence="1" type="primary">rplN</name>
    <name type="ordered locus">A1G_05505</name>
</gene>
<sequence length="122" mass="13243">MIQMQSILEVADNSGAKKVMCIKVLGGSHHMVAKLGDVIVVSVKDAIPGGKVKKGDVYKGLIVRTKTGVVRPDGSTIKFDQNALVLLNKQDEPIGTRVFGPVTRELRAKKYVRIMSLAEEVL</sequence>
<reference key="1">
    <citation type="submission" date="2007-09" db="EMBL/GenBank/DDBJ databases">
        <title>Complete genome sequence of Rickettsia rickettsii.</title>
        <authorList>
            <person name="Madan A."/>
            <person name="Fahey J."/>
            <person name="Helton E."/>
            <person name="Ketteman M."/>
            <person name="Madan A."/>
            <person name="Rodrigues S."/>
            <person name="Sanchez A."/>
            <person name="Dasch G."/>
            <person name="Eremeeva M."/>
        </authorList>
    </citation>
    <scope>NUCLEOTIDE SEQUENCE [LARGE SCALE GENOMIC DNA]</scope>
    <source>
        <strain>Sheila Smith</strain>
    </source>
</reference>
<feature type="chain" id="PRO_0000355835" description="Large ribosomal subunit protein uL14">
    <location>
        <begin position="1"/>
        <end position="122"/>
    </location>
</feature>